<protein>
    <recommendedName>
        <fullName evidence="1">ATP-dependent DNA helicase Hel308</fullName>
        <ecNumber evidence="1 2">5.6.2.4</ecNumber>
    </recommendedName>
    <alternativeName>
        <fullName evidence="1">DNA 3'-5' helicase Hel308</fullName>
    </alternativeName>
</protein>
<proteinExistence type="evidence at protein level"/>
<sequence>MKVGELNVSEKIKEILRERGIEELYPPQAEALTSGVLEGENLLVAIPTASGKTLIAEIAIANKLLEEGGKAVYIVPLKALAEEKFREFKDWERLGLKVAMATGDYDSKDEWLGKYDIIIATAEKFDSLLRHGSSWIRDVKMLVIDEIHLIGSRDRGATLEFIITQMLGRAQIIGLSATIGNPEELAEWLNAKLIRSDWRPVKLRKGVFYQGFVFWEDGGSERYNSWEELVYDAVKKGKGALVFVNMRRKAEKTALELAKKVKNYLDRKELRELRELAESLEENPTNEKLAKALLSGVAFHHAGLGRDERVLVEDNFRKGLIKVVVATPTLSAGINTPAFRVIIRDTWRYSEFGMERIPVLEVQQMMGRAGRPRYDEVGEAIIVSTTEEPSLVIDHYIKGKPEKLFSQLSNESILRSQILALIATFGYSEFKEIYDFLERTFYAHQGKDPYMLEEKIRRIIYFLLENEFIEVTLEDEIKPLPLGVRTTKLYIDPMTAKIFKDTLPRIEKNPNPLGIFHMISLAPDLTPLSYSKRETSMLEDEYYSLMDRLYFELDYENERKFFRAFKTALVLNAWINEVPEGEIVERFNVEPGDIYRIVETAEWLIYSLGEIAKVLEASQEVVDYVNTLRLRVKHGIREELIPLMELPMVGRKRARALYNAGFKDLESIRNAKPSELLRIEGIGAKIVEGIFKYLGKEVKITERPRKGTLDYFLNP</sequence>
<keyword id="KW-0067">ATP-binding</keyword>
<keyword id="KW-0227">DNA damage</keyword>
<keyword id="KW-0234">DNA repair</keyword>
<keyword id="KW-0238">DNA-binding</keyword>
<keyword id="KW-0347">Helicase</keyword>
<keyword id="KW-0378">Hydrolase</keyword>
<keyword id="KW-0413">Isomerase</keyword>
<keyword id="KW-0547">Nucleotide-binding</keyword>
<keyword id="KW-0694">RNA-binding</keyword>
<evidence type="ECO:0000255" key="1">
    <source>
        <dbReference type="HAMAP-Rule" id="MF_00442"/>
    </source>
</evidence>
<evidence type="ECO:0000269" key="2">
    <source>
    </source>
</evidence>
<gene>
    <name evidence="1" type="primary">hel308</name>
    <name type="ordered locus">PYRAB08810</name>
    <name type="ORF">PAB0592</name>
</gene>
<feature type="chain" id="PRO_0000102109" description="ATP-dependent DNA helicase Hel308">
    <location>
        <begin position="1"/>
        <end position="715"/>
    </location>
</feature>
<feature type="domain" description="Helicase ATP-binding" evidence="1">
    <location>
        <begin position="33"/>
        <end position="197"/>
    </location>
</feature>
<feature type="domain" description="Helicase C-terminal" evidence="1">
    <location>
        <begin position="226"/>
        <end position="422"/>
    </location>
</feature>
<feature type="short sequence motif" description="Q motif">
    <location>
        <begin position="1"/>
        <end position="29"/>
    </location>
</feature>
<feature type="short sequence motif" description="DEAH box" evidence="1">
    <location>
        <begin position="145"/>
        <end position="148"/>
    </location>
</feature>
<feature type="binding site" evidence="1">
    <location>
        <position position="28"/>
    </location>
    <ligand>
        <name>ATP</name>
        <dbReference type="ChEBI" id="CHEBI:30616"/>
    </ligand>
</feature>
<feature type="binding site" evidence="1">
    <location>
        <begin position="46"/>
        <end position="53"/>
    </location>
    <ligand>
        <name>ATP</name>
        <dbReference type="ChEBI" id="CHEBI:30616"/>
    </ligand>
</feature>
<reference key="1">
    <citation type="journal article" date="2003" name="Mol. Microbiol.">
        <title>An integrated analysis of the genome of the hyperthermophilic archaeon Pyrococcus abyssi.</title>
        <authorList>
            <person name="Cohen G.N."/>
            <person name="Barbe V."/>
            <person name="Flament D."/>
            <person name="Galperin M."/>
            <person name="Heilig R."/>
            <person name="Lecompte O."/>
            <person name="Poch O."/>
            <person name="Prieur D."/>
            <person name="Querellou J."/>
            <person name="Ripp R."/>
            <person name="Thierry J.-C."/>
            <person name="Van der Oost J."/>
            <person name="Weissenbach J."/>
            <person name="Zivanovic Y."/>
            <person name="Forterre P."/>
        </authorList>
    </citation>
    <scope>NUCLEOTIDE SEQUENCE [LARGE SCALE GENOMIC DNA]</scope>
    <source>
        <strain>GE5 / Orsay</strain>
    </source>
</reference>
<reference key="2">
    <citation type="journal article" date="2012" name="Curr. Microbiol.">
        <title>Re-annotation of two hyperthermophilic archaea Pyrococcus abyssi GE5 and Pyrococcus furiosus DSM 3638.</title>
        <authorList>
            <person name="Gao J."/>
            <person name="Wang J."/>
        </authorList>
    </citation>
    <scope>GENOME REANNOTATION</scope>
    <source>
        <strain>GE5 / Orsay</strain>
    </source>
</reference>
<reference key="3">
    <citation type="journal article" date="2021" name="Biomolecules">
        <title>Phylogenetic Diversity of Lhr Proteins and Biochemical Activities of the Thermococcales aLhr2 DNA/RNA Helicase.</title>
        <authorList>
            <person name="Hajj M."/>
            <person name="Langendijk-Genevaux P."/>
            <person name="Batista M."/>
            <person name="Quentin Y."/>
            <person name="Laurent S."/>
            <person name="Capeyrou R."/>
            <person name="Abdel-Razzak Z."/>
            <person name="Flament D."/>
            <person name="Chamieh H."/>
            <person name="Fichant G."/>
            <person name="Clouet-d'Orval B."/>
            <person name="Bouvier M."/>
        </authorList>
    </citation>
    <scope>FUNCTION</scope>
    <scope>CATALYTIC ACTIVITY</scope>
    <scope>DNA-BINDING</scope>
    <scope>RNA-BINDING</scope>
    <source>
        <strain>GE5 / Orsay</strain>
    </source>
</reference>
<name>HELS_PYRAB</name>
<organism>
    <name type="scientific">Pyrococcus abyssi (strain GE5 / Orsay)</name>
    <dbReference type="NCBI Taxonomy" id="272844"/>
    <lineage>
        <taxon>Archaea</taxon>
        <taxon>Methanobacteriati</taxon>
        <taxon>Methanobacteriota</taxon>
        <taxon>Thermococci</taxon>
        <taxon>Thermococcales</taxon>
        <taxon>Thermococcaceae</taxon>
        <taxon>Pyrococcus</taxon>
    </lineage>
</organism>
<accession>Q9V0A9</accession>
<accession>G8ZI46</accession>
<comment type="function">
    <text evidence="1">DNA-dependent ATPase and 3'-5' DNA helicase that may be involved in repair of stalled replication forks.</text>
</comment>
<comment type="function">
    <text evidence="2">Rapidly unwinds double-stranded (ds)DNA with a 3'-overhang, has no strand reannealing capabilities (PubMed:34206878). Binds single-stranded (ss)DNA, dsDNA with a 3'-overhang and ssRNA (PubMed:34206878).</text>
</comment>
<comment type="catalytic activity">
    <reaction evidence="1 2">
        <text>Couples ATP hydrolysis with the unwinding of duplex DNA by translocating in the 3'-5' direction.</text>
        <dbReference type="EC" id="5.6.2.4"/>
    </reaction>
</comment>
<comment type="catalytic activity">
    <reaction evidence="1">
        <text>ATP + H2O = ADP + phosphate + H(+)</text>
        <dbReference type="Rhea" id="RHEA:13065"/>
        <dbReference type="ChEBI" id="CHEBI:15377"/>
        <dbReference type="ChEBI" id="CHEBI:15378"/>
        <dbReference type="ChEBI" id="CHEBI:30616"/>
        <dbReference type="ChEBI" id="CHEBI:43474"/>
        <dbReference type="ChEBI" id="CHEBI:456216"/>
        <dbReference type="EC" id="5.6.2.4"/>
    </reaction>
</comment>
<comment type="subunit">
    <text evidence="1">Monomer.</text>
</comment>
<comment type="similarity">
    <text evidence="1">Belongs to the helicase family. Hel308 subfamily.</text>
</comment>
<dbReference type="EC" id="5.6.2.4" evidence="1 2"/>
<dbReference type="EMBL" id="AJ248285">
    <property type="protein sequence ID" value="CAB49795.1"/>
    <property type="molecule type" value="Genomic_DNA"/>
</dbReference>
<dbReference type="EMBL" id="HE613800">
    <property type="protein sequence ID" value="CCE70287.1"/>
    <property type="molecule type" value="Genomic_DNA"/>
</dbReference>
<dbReference type="PIR" id="B75135">
    <property type="entry name" value="B75135"/>
</dbReference>
<dbReference type="RefSeq" id="WP_010868004.1">
    <property type="nucleotide sequence ID" value="NC_000868.1"/>
</dbReference>
<dbReference type="SMR" id="Q9V0A9"/>
<dbReference type="STRING" id="272844.PAB0592"/>
<dbReference type="KEGG" id="pab:PAB0592"/>
<dbReference type="PATRIC" id="fig|272844.11.peg.931"/>
<dbReference type="eggNOG" id="arCOG00553">
    <property type="taxonomic scope" value="Archaea"/>
</dbReference>
<dbReference type="HOGENOM" id="CLU_006553_3_0_2"/>
<dbReference type="OrthoDB" id="371946at2157"/>
<dbReference type="PhylomeDB" id="Q9V0A9"/>
<dbReference type="Proteomes" id="UP000000810">
    <property type="component" value="Chromosome"/>
</dbReference>
<dbReference type="Proteomes" id="UP000009139">
    <property type="component" value="Chromosome"/>
</dbReference>
<dbReference type="GO" id="GO:0043138">
    <property type="term" value="F:3'-5' DNA helicase activity"/>
    <property type="evidence" value="ECO:0007669"/>
    <property type="project" value="UniProtKB-UniRule"/>
</dbReference>
<dbReference type="GO" id="GO:0005524">
    <property type="term" value="F:ATP binding"/>
    <property type="evidence" value="ECO:0007669"/>
    <property type="project" value="UniProtKB-UniRule"/>
</dbReference>
<dbReference type="GO" id="GO:0016887">
    <property type="term" value="F:ATP hydrolysis activity"/>
    <property type="evidence" value="ECO:0007669"/>
    <property type="project" value="RHEA"/>
</dbReference>
<dbReference type="GO" id="GO:0003677">
    <property type="term" value="F:DNA binding"/>
    <property type="evidence" value="ECO:0007669"/>
    <property type="project" value="UniProtKB-UniRule"/>
</dbReference>
<dbReference type="GO" id="GO:0006281">
    <property type="term" value="P:DNA repair"/>
    <property type="evidence" value="ECO:0007669"/>
    <property type="project" value="UniProtKB-UniRule"/>
</dbReference>
<dbReference type="CDD" id="cd18028">
    <property type="entry name" value="DEXHc_archSki2"/>
    <property type="match status" value="1"/>
</dbReference>
<dbReference type="CDD" id="cd18795">
    <property type="entry name" value="SF2_C_Ski2"/>
    <property type="match status" value="1"/>
</dbReference>
<dbReference type="Gene3D" id="1.10.3380.30">
    <property type="match status" value="1"/>
</dbReference>
<dbReference type="Gene3D" id="1.10.150.20">
    <property type="entry name" value="5' to 3' exonuclease, C-terminal subdomain"/>
    <property type="match status" value="1"/>
</dbReference>
<dbReference type="Gene3D" id="3.40.50.300">
    <property type="entry name" value="P-loop containing nucleotide triphosphate hydrolases"/>
    <property type="match status" value="2"/>
</dbReference>
<dbReference type="HAMAP" id="MF_00442">
    <property type="entry name" value="Helicase_Hel308"/>
    <property type="match status" value="1"/>
</dbReference>
<dbReference type="InterPro" id="IPR011545">
    <property type="entry name" value="DEAD/DEAH_box_helicase_dom"/>
</dbReference>
<dbReference type="InterPro" id="IPR048772">
    <property type="entry name" value="Hel308-like_dom4"/>
</dbReference>
<dbReference type="InterPro" id="IPR050474">
    <property type="entry name" value="Hel308_SKI2-like"/>
</dbReference>
<dbReference type="InterPro" id="IPR014001">
    <property type="entry name" value="Helicase_ATP-bd"/>
</dbReference>
<dbReference type="InterPro" id="IPR001650">
    <property type="entry name" value="Helicase_C-like"/>
</dbReference>
<dbReference type="InterPro" id="IPR022965">
    <property type="entry name" value="Helicase_Hel308"/>
</dbReference>
<dbReference type="InterPro" id="IPR003583">
    <property type="entry name" value="Hlx-hairpin-Hlx_DNA-bd_motif"/>
</dbReference>
<dbReference type="InterPro" id="IPR027417">
    <property type="entry name" value="P-loop_NTPase"/>
</dbReference>
<dbReference type="InterPro" id="IPR036390">
    <property type="entry name" value="WH_DNA-bd_sf"/>
</dbReference>
<dbReference type="NCBIfam" id="NF001308">
    <property type="entry name" value="PRK00254.1"/>
    <property type="match status" value="1"/>
</dbReference>
<dbReference type="PANTHER" id="PTHR47961:SF10">
    <property type="entry name" value="ATP-DEPENDENT DNA HELICASE HEL308"/>
    <property type="match status" value="1"/>
</dbReference>
<dbReference type="PANTHER" id="PTHR47961">
    <property type="entry name" value="DNA POLYMERASE THETA, PUTATIVE (AFU_ORTHOLOGUE AFUA_1G05260)-RELATED"/>
    <property type="match status" value="1"/>
</dbReference>
<dbReference type="Pfam" id="PF00270">
    <property type="entry name" value="DEAD"/>
    <property type="match status" value="1"/>
</dbReference>
<dbReference type="Pfam" id="PF00271">
    <property type="entry name" value="Helicase_C"/>
    <property type="match status" value="1"/>
</dbReference>
<dbReference type="Pfam" id="PF21280">
    <property type="entry name" value="Helicase_dom4_arc"/>
    <property type="match status" value="1"/>
</dbReference>
<dbReference type="Pfam" id="PF14520">
    <property type="entry name" value="HHH_5"/>
    <property type="match status" value="1"/>
</dbReference>
<dbReference type="SMART" id="SM00487">
    <property type="entry name" value="DEXDc"/>
    <property type="match status" value="1"/>
</dbReference>
<dbReference type="SMART" id="SM00490">
    <property type="entry name" value="HELICc"/>
    <property type="match status" value="1"/>
</dbReference>
<dbReference type="SMART" id="SM00278">
    <property type="entry name" value="HhH1"/>
    <property type="match status" value="2"/>
</dbReference>
<dbReference type="SUPFAM" id="SSF52540">
    <property type="entry name" value="P-loop containing nucleoside triphosphate hydrolases"/>
    <property type="match status" value="2"/>
</dbReference>
<dbReference type="SUPFAM" id="SSF158702">
    <property type="entry name" value="Sec63 N-terminal domain-like"/>
    <property type="match status" value="1"/>
</dbReference>
<dbReference type="SUPFAM" id="SSF46785">
    <property type="entry name" value="Winged helix' DNA-binding domain"/>
    <property type="match status" value="1"/>
</dbReference>
<dbReference type="PROSITE" id="PS51192">
    <property type="entry name" value="HELICASE_ATP_BIND_1"/>
    <property type="match status" value="1"/>
</dbReference>
<dbReference type="PROSITE" id="PS51194">
    <property type="entry name" value="HELICASE_CTER"/>
    <property type="match status" value="1"/>
</dbReference>
<dbReference type="PROSITE" id="PS51195">
    <property type="entry name" value="Q_MOTIF"/>
    <property type="match status" value="1"/>
</dbReference>